<dbReference type="EC" id="6.3.1.5" evidence="1"/>
<dbReference type="EMBL" id="CU928160">
    <property type="protein sequence ID" value="CAQ98657.1"/>
    <property type="molecule type" value="Genomic_DNA"/>
</dbReference>
<dbReference type="RefSeq" id="WP_000175011.1">
    <property type="nucleotide sequence ID" value="NC_011741.1"/>
</dbReference>
<dbReference type="SMR" id="B7M1F2"/>
<dbReference type="KEGG" id="ecr:ECIAI1_1801"/>
<dbReference type="HOGENOM" id="CLU_059327_3_0_6"/>
<dbReference type="UniPathway" id="UPA00253">
    <property type="reaction ID" value="UER00333"/>
</dbReference>
<dbReference type="GO" id="GO:0005737">
    <property type="term" value="C:cytoplasm"/>
    <property type="evidence" value="ECO:0007669"/>
    <property type="project" value="InterPro"/>
</dbReference>
<dbReference type="GO" id="GO:0005524">
    <property type="term" value="F:ATP binding"/>
    <property type="evidence" value="ECO:0007669"/>
    <property type="project" value="UniProtKB-UniRule"/>
</dbReference>
<dbReference type="GO" id="GO:0004359">
    <property type="term" value="F:glutaminase activity"/>
    <property type="evidence" value="ECO:0007669"/>
    <property type="project" value="InterPro"/>
</dbReference>
<dbReference type="GO" id="GO:0046872">
    <property type="term" value="F:metal ion binding"/>
    <property type="evidence" value="ECO:0007669"/>
    <property type="project" value="UniProtKB-KW"/>
</dbReference>
<dbReference type="GO" id="GO:0003952">
    <property type="term" value="F:NAD+ synthase (glutamine-hydrolyzing) activity"/>
    <property type="evidence" value="ECO:0007669"/>
    <property type="project" value="InterPro"/>
</dbReference>
<dbReference type="GO" id="GO:0008795">
    <property type="term" value="F:NAD+ synthase activity"/>
    <property type="evidence" value="ECO:0007669"/>
    <property type="project" value="UniProtKB-UniRule"/>
</dbReference>
<dbReference type="GO" id="GO:0009435">
    <property type="term" value="P:NAD biosynthetic process"/>
    <property type="evidence" value="ECO:0007669"/>
    <property type="project" value="UniProtKB-UniRule"/>
</dbReference>
<dbReference type="CDD" id="cd00553">
    <property type="entry name" value="NAD_synthase"/>
    <property type="match status" value="1"/>
</dbReference>
<dbReference type="FunFam" id="3.40.50.620:FF:000015">
    <property type="entry name" value="NH(3)-dependent NAD(+) synthetase"/>
    <property type="match status" value="1"/>
</dbReference>
<dbReference type="Gene3D" id="3.40.50.620">
    <property type="entry name" value="HUPs"/>
    <property type="match status" value="1"/>
</dbReference>
<dbReference type="HAMAP" id="MF_00193">
    <property type="entry name" value="NadE_ammonia_dep"/>
    <property type="match status" value="1"/>
</dbReference>
<dbReference type="InterPro" id="IPR022310">
    <property type="entry name" value="NAD/GMP_synthase"/>
</dbReference>
<dbReference type="InterPro" id="IPR003694">
    <property type="entry name" value="NAD_synthase"/>
</dbReference>
<dbReference type="InterPro" id="IPR022926">
    <property type="entry name" value="NH(3)-dep_NAD(+)_synth"/>
</dbReference>
<dbReference type="InterPro" id="IPR014729">
    <property type="entry name" value="Rossmann-like_a/b/a_fold"/>
</dbReference>
<dbReference type="NCBIfam" id="TIGR00552">
    <property type="entry name" value="nadE"/>
    <property type="match status" value="1"/>
</dbReference>
<dbReference type="NCBIfam" id="NF001979">
    <property type="entry name" value="PRK00768.1"/>
    <property type="match status" value="1"/>
</dbReference>
<dbReference type="PANTHER" id="PTHR23090">
    <property type="entry name" value="NH 3 /GLUTAMINE-DEPENDENT NAD + SYNTHETASE"/>
    <property type="match status" value="1"/>
</dbReference>
<dbReference type="PANTHER" id="PTHR23090:SF7">
    <property type="entry name" value="NH(3)-DEPENDENT NAD(+) SYNTHETASE"/>
    <property type="match status" value="1"/>
</dbReference>
<dbReference type="Pfam" id="PF02540">
    <property type="entry name" value="NAD_synthase"/>
    <property type="match status" value="1"/>
</dbReference>
<dbReference type="SUPFAM" id="SSF52402">
    <property type="entry name" value="Adenine nucleotide alpha hydrolases-like"/>
    <property type="match status" value="1"/>
</dbReference>
<protein>
    <recommendedName>
        <fullName evidence="1">NH(3)-dependent NAD(+) synthetase</fullName>
        <ecNumber evidence="1">6.3.1.5</ecNumber>
    </recommendedName>
</protein>
<keyword id="KW-0067">ATP-binding</keyword>
<keyword id="KW-0436">Ligase</keyword>
<keyword id="KW-0460">Magnesium</keyword>
<keyword id="KW-0479">Metal-binding</keyword>
<keyword id="KW-0520">NAD</keyword>
<keyword id="KW-0547">Nucleotide-binding</keyword>
<organism>
    <name type="scientific">Escherichia coli O8 (strain IAI1)</name>
    <dbReference type="NCBI Taxonomy" id="585034"/>
    <lineage>
        <taxon>Bacteria</taxon>
        <taxon>Pseudomonadati</taxon>
        <taxon>Pseudomonadota</taxon>
        <taxon>Gammaproteobacteria</taxon>
        <taxon>Enterobacterales</taxon>
        <taxon>Enterobacteriaceae</taxon>
        <taxon>Escherichia</taxon>
    </lineage>
</organism>
<feature type="chain" id="PRO_1000118619" description="NH(3)-dependent NAD(+) synthetase">
    <location>
        <begin position="1"/>
        <end position="275"/>
    </location>
</feature>
<feature type="binding site" evidence="1">
    <location>
        <begin position="46"/>
        <end position="53"/>
    </location>
    <ligand>
        <name>ATP</name>
        <dbReference type="ChEBI" id="CHEBI:30616"/>
    </ligand>
</feature>
<feature type="binding site" evidence="1">
    <location>
        <position position="52"/>
    </location>
    <ligand>
        <name>Mg(2+)</name>
        <dbReference type="ChEBI" id="CHEBI:18420"/>
    </ligand>
</feature>
<feature type="binding site" evidence="1">
    <location>
        <position position="140"/>
    </location>
    <ligand>
        <name>deamido-NAD(+)</name>
        <dbReference type="ChEBI" id="CHEBI:58437"/>
    </ligand>
</feature>
<feature type="binding site" evidence="1">
    <location>
        <position position="160"/>
    </location>
    <ligand>
        <name>ATP</name>
        <dbReference type="ChEBI" id="CHEBI:30616"/>
    </ligand>
</feature>
<feature type="binding site" evidence="1">
    <location>
        <position position="165"/>
    </location>
    <ligand>
        <name>Mg(2+)</name>
        <dbReference type="ChEBI" id="CHEBI:18420"/>
    </ligand>
</feature>
<feature type="binding site" evidence="1">
    <location>
        <position position="173"/>
    </location>
    <ligand>
        <name>deamido-NAD(+)</name>
        <dbReference type="ChEBI" id="CHEBI:58437"/>
    </ligand>
</feature>
<feature type="binding site" evidence="1">
    <location>
        <position position="180"/>
    </location>
    <ligand>
        <name>deamido-NAD(+)</name>
        <dbReference type="ChEBI" id="CHEBI:58437"/>
    </ligand>
</feature>
<feature type="binding site" evidence="1">
    <location>
        <position position="189"/>
    </location>
    <ligand>
        <name>ATP</name>
        <dbReference type="ChEBI" id="CHEBI:30616"/>
    </ligand>
</feature>
<feature type="binding site" evidence="1">
    <location>
        <position position="211"/>
    </location>
    <ligand>
        <name>ATP</name>
        <dbReference type="ChEBI" id="CHEBI:30616"/>
    </ligand>
</feature>
<feature type="binding site" evidence="1">
    <location>
        <begin position="260"/>
        <end position="261"/>
    </location>
    <ligand>
        <name>deamido-NAD(+)</name>
        <dbReference type="ChEBI" id="CHEBI:58437"/>
    </ligand>
</feature>
<accession>B7M1F2</accession>
<comment type="function">
    <text evidence="1">Catalyzes the ATP-dependent amidation of deamido-NAD to form NAD. Uses ammonia as a nitrogen source.</text>
</comment>
<comment type="catalytic activity">
    <reaction evidence="1">
        <text>deamido-NAD(+) + NH4(+) + ATP = AMP + diphosphate + NAD(+) + H(+)</text>
        <dbReference type="Rhea" id="RHEA:21188"/>
        <dbReference type="ChEBI" id="CHEBI:15378"/>
        <dbReference type="ChEBI" id="CHEBI:28938"/>
        <dbReference type="ChEBI" id="CHEBI:30616"/>
        <dbReference type="ChEBI" id="CHEBI:33019"/>
        <dbReference type="ChEBI" id="CHEBI:57540"/>
        <dbReference type="ChEBI" id="CHEBI:58437"/>
        <dbReference type="ChEBI" id="CHEBI:456215"/>
        <dbReference type="EC" id="6.3.1.5"/>
    </reaction>
</comment>
<comment type="pathway">
    <text evidence="1">Cofactor biosynthesis; NAD(+) biosynthesis; NAD(+) from deamido-NAD(+) (ammonia route): step 1/1.</text>
</comment>
<comment type="subunit">
    <text evidence="1">Homodimer.</text>
</comment>
<comment type="similarity">
    <text evidence="1">Belongs to the NAD synthetase family.</text>
</comment>
<evidence type="ECO:0000255" key="1">
    <source>
        <dbReference type="HAMAP-Rule" id="MF_00193"/>
    </source>
</evidence>
<gene>
    <name evidence="1" type="primary">nadE</name>
    <name type="ordered locus">ECIAI1_1801</name>
</gene>
<name>NADE_ECO8A</name>
<reference key="1">
    <citation type="journal article" date="2009" name="PLoS Genet.">
        <title>Organised genome dynamics in the Escherichia coli species results in highly diverse adaptive paths.</title>
        <authorList>
            <person name="Touchon M."/>
            <person name="Hoede C."/>
            <person name="Tenaillon O."/>
            <person name="Barbe V."/>
            <person name="Baeriswyl S."/>
            <person name="Bidet P."/>
            <person name="Bingen E."/>
            <person name="Bonacorsi S."/>
            <person name="Bouchier C."/>
            <person name="Bouvet O."/>
            <person name="Calteau A."/>
            <person name="Chiapello H."/>
            <person name="Clermont O."/>
            <person name="Cruveiller S."/>
            <person name="Danchin A."/>
            <person name="Diard M."/>
            <person name="Dossat C."/>
            <person name="Karoui M.E."/>
            <person name="Frapy E."/>
            <person name="Garry L."/>
            <person name="Ghigo J.M."/>
            <person name="Gilles A.M."/>
            <person name="Johnson J."/>
            <person name="Le Bouguenec C."/>
            <person name="Lescat M."/>
            <person name="Mangenot S."/>
            <person name="Martinez-Jehanne V."/>
            <person name="Matic I."/>
            <person name="Nassif X."/>
            <person name="Oztas S."/>
            <person name="Petit M.A."/>
            <person name="Pichon C."/>
            <person name="Rouy Z."/>
            <person name="Ruf C.S."/>
            <person name="Schneider D."/>
            <person name="Tourret J."/>
            <person name="Vacherie B."/>
            <person name="Vallenet D."/>
            <person name="Medigue C."/>
            <person name="Rocha E.P.C."/>
            <person name="Denamur E."/>
        </authorList>
    </citation>
    <scope>NUCLEOTIDE SEQUENCE [LARGE SCALE GENOMIC DNA]</scope>
    <source>
        <strain>IAI1</strain>
    </source>
</reference>
<proteinExistence type="inferred from homology"/>
<sequence length="275" mass="30686">MTLQQQIIKALGAKPQINAEEEIRRSIDFLKSYLQTYPFIKSLVLGISGGQDSTLAGKLCQMAINELRLETGNESLQFIAVRMPYGVQADEQDCQDAIAFIQPDRVLTVNIKGAVLASEQALREAGIELSDFVRGNEKARERMKAQYSIAGMTSGVVVGTDHAAEAITGFFTKYGDGGTDINPLYRLNKRQGKQLLTALGCPEHLYKKAPTADLEDDRPSLPDEVALGVTYDNIDDYLEGKNVPEQVARTIENWYLKTEHKRRPPITVFDDFWKK</sequence>